<dbReference type="EMBL" id="EU085462">
    <property type="protein sequence ID" value="ABW82672.1"/>
    <property type="molecule type" value="mRNA"/>
</dbReference>
<dbReference type="SMR" id="B4XT00"/>
<dbReference type="GO" id="GO:0005576">
    <property type="term" value="C:extracellular region"/>
    <property type="evidence" value="ECO:0007669"/>
    <property type="project" value="UniProtKB-SubCell"/>
</dbReference>
<dbReference type="GO" id="GO:0090729">
    <property type="term" value="F:toxin activity"/>
    <property type="evidence" value="ECO:0007669"/>
    <property type="project" value="UniProtKB-KW"/>
</dbReference>
<dbReference type="FunFam" id="3.10.100.10:FF:000087">
    <property type="entry name" value="Snaclec rhodocetin subunit delta"/>
    <property type="match status" value="1"/>
</dbReference>
<dbReference type="Gene3D" id="3.10.100.10">
    <property type="entry name" value="Mannose-Binding Protein A, subunit A"/>
    <property type="match status" value="1"/>
</dbReference>
<dbReference type="InterPro" id="IPR001304">
    <property type="entry name" value="C-type_lectin-like"/>
</dbReference>
<dbReference type="InterPro" id="IPR016186">
    <property type="entry name" value="C-type_lectin-like/link_sf"/>
</dbReference>
<dbReference type="InterPro" id="IPR050111">
    <property type="entry name" value="C-type_lectin/snaclec_domain"/>
</dbReference>
<dbReference type="InterPro" id="IPR018378">
    <property type="entry name" value="C-type_lectin_CS"/>
</dbReference>
<dbReference type="InterPro" id="IPR016187">
    <property type="entry name" value="CTDL_fold"/>
</dbReference>
<dbReference type="PANTHER" id="PTHR22803">
    <property type="entry name" value="MANNOSE, PHOSPHOLIPASE, LECTIN RECEPTOR RELATED"/>
    <property type="match status" value="1"/>
</dbReference>
<dbReference type="Pfam" id="PF00059">
    <property type="entry name" value="Lectin_C"/>
    <property type="match status" value="1"/>
</dbReference>
<dbReference type="PRINTS" id="PR01504">
    <property type="entry name" value="PNCREATITSAP"/>
</dbReference>
<dbReference type="SMART" id="SM00034">
    <property type="entry name" value="CLECT"/>
    <property type="match status" value="1"/>
</dbReference>
<dbReference type="SUPFAM" id="SSF56436">
    <property type="entry name" value="C-type lectin-like"/>
    <property type="match status" value="1"/>
</dbReference>
<dbReference type="PROSITE" id="PS00615">
    <property type="entry name" value="C_TYPE_LECTIN_1"/>
    <property type="match status" value="1"/>
</dbReference>
<dbReference type="PROSITE" id="PS50041">
    <property type="entry name" value="C_TYPE_LECTIN_2"/>
    <property type="match status" value="1"/>
</dbReference>
<evidence type="ECO:0000250" key="1"/>
<evidence type="ECO:0000255" key="2"/>
<evidence type="ECO:0000255" key="3">
    <source>
        <dbReference type="PROSITE-ProRule" id="PRU00040"/>
    </source>
</evidence>
<evidence type="ECO:0000305" key="4"/>
<comment type="function">
    <text evidence="1">Interferes with one step of hemostasis (modulation of platelet aggregation, or coagulation cascade, for example).</text>
</comment>
<comment type="subunit">
    <text evidence="1">Heterodimer; disulfide-linked.</text>
</comment>
<comment type="subcellular location">
    <subcellularLocation>
        <location evidence="1">Secreted</location>
    </subcellularLocation>
</comment>
<comment type="tissue specificity">
    <text>Expressed by the venom gland.</text>
</comment>
<comment type="miscellaneous">
    <text>Shows greater sequence similarity to the beta than alpha subunits compared to other heterodimer snaclecs.</text>
</comment>
<comment type="similarity">
    <text evidence="4">Belongs to the snaclec family.</text>
</comment>
<keyword id="KW-1015">Disulfide bond</keyword>
<keyword id="KW-1199">Hemostasis impairing toxin</keyword>
<keyword id="KW-0964">Secreted</keyword>
<keyword id="KW-0732">Signal</keyword>
<keyword id="KW-0800">Toxin</keyword>
<organism>
    <name type="scientific">Macrovipera lebetinus</name>
    <name type="common">Levantine viper</name>
    <name type="synonym">Vipera lebetina</name>
    <dbReference type="NCBI Taxonomy" id="3148341"/>
    <lineage>
        <taxon>Eukaryota</taxon>
        <taxon>Metazoa</taxon>
        <taxon>Chordata</taxon>
        <taxon>Craniata</taxon>
        <taxon>Vertebrata</taxon>
        <taxon>Euteleostomi</taxon>
        <taxon>Lepidosauria</taxon>
        <taxon>Squamata</taxon>
        <taxon>Bifurcata</taxon>
        <taxon>Unidentata</taxon>
        <taxon>Episquamata</taxon>
        <taxon>Toxicofera</taxon>
        <taxon>Serpentes</taxon>
        <taxon>Colubroidea</taxon>
        <taxon>Viperidae</taxon>
        <taxon>Viperinae</taxon>
        <taxon>Macrovipera</taxon>
    </lineage>
</organism>
<feature type="signal peptide" evidence="2">
    <location>
        <begin position="1"/>
        <end position="24"/>
    </location>
</feature>
<feature type="chain" id="PRO_0000356333" description="Snaclec B1">
    <location>
        <begin position="25"/>
        <end position="148"/>
    </location>
</feature>
<feature type="domain" description="C-type lectin" evidence="3">
    <location>
        <begin position="34"/>
        <end position="145"/>
    </location>
</feature>
<feature type="disulfide bond" evidence="3">
    <location>
        <begin position="27"/>
        <end position="38"/>
    </location>
</feature>
<feature type="disulfide bond" evidence="3">
    <location>
        <begin position="55"/>
        <end position="144"/>
    </location>
</feature>
<feature type="disulfide bond" description="Interchain" evidence="3">
    <location>
        <position position="100"/>
    </location>
</feature>
<feature type="disulfide bond" evidence="3">
    <location>
        <begin position="121"/>
        <end position="136"/>
    </location>
</feature>
<name>SLB1_MACLB</name>
<accession>B4XT00</accession>
<reference key="1">
    <citation type="journal article" date="2009" name="Toxicon">
        <title>C-type lectin protein isoforms of Macrovipera lebetina: cDNA cloning and genetic diversity.</title>
        <authorList>
            <person name="Jebali J."/>
            <person name="Bazaa A."/>
            <person name="Sarray S."/>
            <person name="Benhaj K."/>
            <person name="Karboul A."/>
            <person name="El Ayeb M."/>
            <person name="Marrakchi N."/>
            <person name="Gargouri A."/>
        </authorList>
    </citation>
    <scope>NUCLEOTIDE SEQUENCE [MRNA]</scope>
</reference>
<sequence length="148" mass="16642">MGRIIFVSFGLLVVFLSLSGTGAALNCASGWSGYDQHCYKVFDKPKSWADAEKFCKKQTSGGHLVSFHSSEETDFVVELVSQTLESQILWMGLSKVWNQCDWGWSNGAKLKYKAWAEESYCVYFSSTKKGWRSRACRLLGHFVCKSPA</sequence>
<proteinExistence type="evidence at transcript level"/>
<protein>
    <recommendedName>
        <fullName>Snaclec B1</fullName>
    </recommendedName>
    <alternativeName>
        <fullName>C-type lectin B1</fullName>
    </alternativeName>
</protein>